<organism>
    <name type="scientific">Staphylococcus saprophyticus subsp. saprophyticus (strain ATCC 15305 / DSM 20229 / NCIMB 8711 / NCTC 7292 / S-41)</name>
    <dbReference type="NCBI Taxonomy" id="342451"/>
    <lineage>
        <taxon>Bacteria</taxon>
        <taxon>Bacillati</taxon>
        <taxon>Bacillota</taxon>
        <taxon>Bacilli</taxon>
        <taxon>Bacillales</taxon>
        <taxon>Staphylococcaceae</taxon>
        <taxon>Staphylococcus</taxon>
    </lineage>
</organism>
<keyword id="KW-1185">Reference proteome</keyword>
<keyword id="KW-0687">Ribonucleoprotein</keyword>
<keyword id="KW-0689">Ribosomal protein</keyword>
<evidence type="ECO:0000255" key="1">
    <source>
        <dbReference type="HAMAP-Rule" id="MF_00532"/>
    </source>
</evidence>
<evidence type="ECO:0000256" key="2">
    <source>
        <dbReference type="SAM" id="MobiDB-lite"/>
    </source>
</evidence>
<evidence type="ECO:0000305" key="3"/>
<dbReference type="EMBL" id="AP008934">
    <property type="protein sequence ID" value="BAE17841.1"/>
    <property type="molecule type" value="Genomic_DNA"/>
</dbReference>
<dbReference type="RefSeq" id="WP_002482644.1">
    <property type="nucleotide sequence ID" value="NZ_MTGA01000036.1"/>
</dbReference>
<dbReference type="SMR" id="Q49ZD5"/>
<dbReference type="GeneID" id="66866843"/>
<dbReference type="KEGG" id="ssp:SSP0696"/>
<dbReference type="eggNOG" id="COG0103">
    <property type="taxonomic scope" value="Bacteria"/>
</dbReference>
<dbReference type="HOGENOM" id="CLU_046483_2_1_9"/>
<dbReference type="Proteomes" id="UP000006371">
    <property type="component" value="Chromosome"/>
</dbReference>
<dbReference type="GO" id="GO:0022627">
    <property type="term" value="C:cytosolic small ribosomal subunit"/>
    <property type="evidence" value="ECO:0007669"/>
    <property type="project" value="TreeGrafter"/>
</dbReference>
<dbReference type="GO" id="GO:0003723">
    <property type="term" value="F:RNA binding"/>
    <property type="evidence" value="ECO:0007669"/>
    <property type="project" value="TreeGrafter"/>
</dbReference>
<dbReference type="GO" id="GO:0003735">
    <property type="term" value="F:structural constituent of ribosome"/>
    <property type="evidence" value="ECO:0007669"/>
    <property type="project" value="InterPro"/>
</dbReference>
<dbReference type="GO" id="GO:0006412">
    <property type="term" value="P:translation"/>
    <property type="evidence" value="ECO:0007669"/>
    <property type="project" value="UniProtKB-UniRule"/>
</dbReference>
<dbReference type="FunFam" id="3.30.230.10:FF:000001">
    <property type="entry name" value="30S ribosomal protein S9"/>
    <property type="match status" value="1"/>
</dbReference>
<dbReference type="Gene3D" id="3.30.230.10">
    <property type="match status" value="1"/>
</dbReference>
<dbReference type="HAMAP" id="MF_00532_B">
    <property type="entry name" value="Ribosomal_uS9_B"/>
    <property type="match status" value="1"/>
</dbReference>
<dbReference type="InterPro" id="IPR020568">
    <property type="entry name" value="Ribosomal_Su5_D2-typ_SF"/>
</dbReference>
<dbReference type="InterPro" id="IPR000754">
    <property type="entry name" value="Ribosomal_uS9"/>
</dbReference>
<dbReference type="InterPro" id="IPR023035">
    <property type="entry name" value="Ribosomal_uS9_bac/plastid"/>
</dbReference>
<dbReference type="InterPro" id="IPR020574">
    <property type="entry name" value="Ribosomal_uS9_CS"/>
</dbReference>
<dbReference type="InterPro" id="IPR014721">
    <property type="entry name" value="Ribsml_uS5_D2-typ_fold_subgr"/>
</dbReference>
<dbReference type="NCBIfam" id="NF001099">
    <property type="entry name" value="PRK00132.1"/>
    <property type="match status" value="1"/>
</dbReference>
<dbReference type="PANTHER" id="PTHR21569">
    <property type="entry name" value="RIBOSOMAL PROTEIN S9"/>
    <property type="match status" value="1"/>
</dbReference>
<dbReference type="PANTHER" id="PTHR21569:SF1">
    <property type="entry name" value="SMALL RIBOSOMAL SUBUNIT PROTEIN US9M"/>
    <property type="match status" value="1"/>
</dbReference>
<dbReference type="Pfam" id="PF00380">
    <property type="entry name" value="Ribosomal_S9"/>
    <property type="match status" value="1"/>
</dbReference>
<dbReference type="SUPFAM" id="SSF54211">
    <property type="entry name" value="Ribosomal protein S5 domain 2-like"/>
    <property type="match status" value="1"/>
</dbReference>
<dbReference type="PROSITE" id="PS00360">
    <property type="entry name" value="RIBOSOMAL_S9"/>
    <property type="match status" value="1"/>
</dbReference>
<protein>
    <recommendedName>
        <fullName evidence="1">Small ribosomal subunit protein uS9</fullName>
    </recommendedName>
    <alternativeName>
        <fullName evidence="3">30S ribosomal protein S9</fullName>
    </alternativeName>
</protein>
<reference key="1">
    <citation type="journal article" date="2005" name="Proc. Natl. Acad. Sci. U.S.A.">
        <title>Whole genome sequence of Staphylococcus saprophyticus reveals the pathogenesis of uncomplicated urinary tract infection.</title>
        <authorList>
            <person name="Kuroda M."/>
            <person name="Yamashita A."/>
            <person name="Hirakawa H."/>
            <person name="Kumano M."/>
            <person name="Morikawa K."/>
            <person name="Higashide M."/>
            <person name="Maruyama A."/>
            <person name="Inose Y."/>
            <person name="Matoba K."/>
            <person name="Toh H."/>
            <person name="Kuhara S."/>
            <person name="Hattori M."/>
            <person name="Ohta T."/>
        </authorList>
    </citation>
    <scope>NUCLEOTIDE SEQUENCE [LARGE SCALE GENOMIC DNA]</scope>
    <source>
        <strain>ATCC 15305 / DSM 20229 / NCIMB 8711 / NCTC 7292 / S-41</strain>
    </source>
</reference>
<comment type="similarity">
    <text evidence="1">Belongs to the universal ribosomal protein uS9 family.</text>
</comment>
<sequence length="130" mass="14555">MAQVEYRGTGRRKNSVARVRLVPGEGNITVNGRDVRSYLPFESLILDINQAFDVTETKGNYDVLVNVQGGGFTGQAQAIRHGISRALLEADPEYRGSLKRAGLLTRDPRMKERKKPGLKKARRSPQFSKR</sequence>
<name>RS9_STAS1</name>
<gene>
    <name evidence="1" type="primary">rpsI</name>
    <name type="ordered locus">SSP0696</name>
</gene>
<feature type="chain" id="PRO_0000111413" description="Small ribosomal subunit protein uS9">
    <location>
        <begin position="1"/>
        <end position="130"/>
    </location>
</feature>
<feature type="region of interest" description="Disordered" evidence="2">
    <location>
        <begin position="98"/>
        <end position="130"/>
    </location>
</feature>
<feature type="compositionally biased region" description="Basic residues" evidence="2">
    <location>
        <begin position="111"/>
        <end position="130"/>
    </location>
</feature>
<proteinExistence type="inferred from homology"/>
<accession>Q49ZD5</accession>